<sequence length="308" mass="34101">MNHFLDIHLTDPADLREIIDQAAIMKSARKGRPRGAPDDTQPLKDRIVALIFEKPSTRTRVSFDVGVRQMGGQTMVLSGADMQLGHGETIADTARVLSRYVDLIMIRTFDEAVLTEMAEFATVPVINGLTDRTHPCQIMADILTFEEHRGPIAGKKVVWSGDGNNVCASFLHAAGQFGFDLTFTGPQTLDPDAEFVELARSKGVNVAVERDPAKAVEGADLVVTDTWVSMHDAQSARERRHNQLRPYRVDAALMSRAKPEALFMHCLPAHRDDEATSEVMDGPQSVIFDEAENRLHAQKAIMRWCLAV</sequence>
<feature type="chain" id="PRO_1000163980" description="Ornithine carbamoyltransferase">
    <location>
        <begin position="1"/>
        <end position="308"/>
    </location>
</feature>
<feature type="binding site" evidence="2">
    <location>
        <begin position="56"/>
        <end position="59"/>
    </location>
    <ligand>
        <name>carbamoyl phosphate</name>
        <dbReference type="ChEBI" id="CHEBI:58228"/>
    </ligand>
</feature>
<feature type="binding site" evidence="2">
    <location>
        <position position="83"/>
    </location>
    <ligand>
        <name>carbamoyl phosphate</name>
        <dbReference type="ChEBI" id="CHEBI:58228"/>
    </ligand>
</feature>
<feature type="binding site" evidence="2">
    <location>
        <position position="107"/>
    </location>
    <ligand>
        <name>carbamoyl phosphate</name>
        <dbReference type="ChEBI" id="CHEBI:58228"/>
    </ligand>
</feature>
<feature type="binding site" evidence="2">
    <location>
        <begin position="134"/>
        <end position="137"/>
    </location>
    <ligand>
        <name>carbamoyl phosphate</name>
        <dbReference type="ChEBI" id="CHEBI:58228"/>
    </ligand>
</feature>
<feature type="binding site" evidence="2">
    <location>
        <position position="165"/>
    </location>
    <ligand>
        <name>L-ornithine</name>
        <dbReference type="ChEBI" id="CHEBI:46911"/>
    </ligand>
</feature>
<feature type="binding site" evidence="2">
    <location>
        <position position="225"/>
    </location>
    <ligand>
        <name>L-ornithine</name>
        <dbReference type="ChEBI" id="CHEBI:46911"/>
    </ligand>
</feature>
<feature type="binding site" evidence="2">
    <location>
        <begin position="229"/>
        <end position="230"/>
    </location>
    <ligand>
        <name>L-ornithine</name>
        <dbReference type="ChEBI" id="CHEBI:46911"/>
    </ligand>
</feature>
<feature type="binding site" evidence="2">
    <location>
        <begin position="266"/>
        <end position="267"/>
    </location>
    <ligand>
        <name>carbamoyl phosphate</name>
        <dbReference type="ChEBI" id="CHEBI:58228"/>
    </ligand>
</feature>
<feature type="binding site" evidence="2">
    <location>
        <position position="294"/>
    </location>
    <ligand>
        <name>carbamoyl phosphate</name>
        <dbReference type="ChEBI" id="CHEBI:58228"/>
    </ligand>
</feature>
<accession>Q169P2</accession>
<reference key="1">
    <citation type="journal article" date="2007" name="J. Bacteriol.">
        <title>The complete genome sequence of Roseobacter denitrificans reveals a mixotrophic rather than photosynthetic metabolism.</title>
        <authorList>
            <person name="Swingley W.D."/>
            <person name="Sadekar S."/>
            <person name="Mastrian S.D."/>
            <person name="Matthies H.J."/>
            <person name="Hao J."/>
            <person name="Ramos H."/>
            <person name="Acharya C.R."/>
            <person name="Conrad A.L."/>
            <person name="Taylor H.L."/>
            <person name="Dejesa L.C."/>
            <person name="Shah M.K."/>
            <person name="O'Huallachain M.E."/>
            <person name="Lince M.T."/>
            <person name="Blankenship R.E."/>
            <person name="Beatty J.T."/>
            <person name="Touchman J.W."/>
        </authorList>
    </citation>
    <scope>NUCLEOTIDE SEQUENCE [LARGE SCALE GENOMIC DNA]</scope>
    <source>
        <strain>ATCC 33942 / OCh 114</strain>
    </source>
</reference>
<evidence type="ECO:0000250" key="1"/>
<evidence type="ECO:0000255" key="2">
    <source>
        <dbReference type="HAMAP-Rule" id="MF_01109"/>
    </source>
</evidence>
<dbReference type="EC" id="2.1.3.3" evidence="2"/>
<dbReference type="EMBL" id="CP000362">
    <property type="protein sequence ID" value="ABG31301.1"/>
    <property type="molecule type" value="Genomic_DNA"/>
</dbReference>
<dbReference type="RefSeq" id="WP_011567921.1">
    <property type="nucleotide sequence ID" value="NC_008209.1"/>
</dbReference>
<dbReference type="SMR" id="Q169P2"/>
<dbReference type="STRING" id="375451.RD1_1677"/>
<dbReference type="KEGG" id="rde:RD1_1677"/>
<dbReference type="eggNOG" id="COG0078">
    <property type="taxonomic scope" value="Bacteria"/>
</dbReference>
<dbReference type="HOGENOM" id="CLU_043846_3_2_5"/>
<dbReference type="OrthoDB" id="9802587at2"/>
<dbReference type="UniPathway" id="UPA00068">
    <property type="reaction ID" value="UER00112"/>
</dbReference>
<dbReference type="Proteomes" id="UP000007029">
    <property type="component" value="Chromosome"/>
</dbReference>
<dbReference type="GO" id="GO:0005737">
    <property type="term" value="C:cytoplasm"/>
    <property type="evidence" value="ECO:0007669"/>
    <property type="project" value="UniProtKB-SubCell"/>
</dbReference>
<dbReference type="GO" id="GO:0016597">
    <property type="term" value="F:amino acid binding"/>
    <property type="evidence" value="ECO:0007669"/>
    <property type="project" value="InterPro"/>
</dbReference>
<dbReference type="GO" id="GO:0004585">
    <property type="term" value="F:ornithine carbamoyltransferase activity"/>
    <property type="evidence" value="ECO:0007669"/>
    <property type="project" value="UniProtKB-UniRule"/>
</dbReference>
<dbReference type="GO" id="GO:0042450">
    <property type="term" value="P:arginine biosynthetic process via ornithine"/>
    <property type="evidence" value="ECO:0007669"/>
    <property type="project" value="TreeGrafter"/>
</dbReference>
<dbReference type="GO" id="GO:0019240">
    <property type="term" value="P:citrulline biosynthetic process"/>
    <property type="evidence" value="ECO:0007669"/>
    <property type="project" value="TreeGrafter"/>
</dbReference>
<dbReference type="GO" id="GO:0006526">
    <property type="term" value="P:L-arginine biosynthetic process"/>
    <property type="evidence" value="ECO:0007669"/>
    <property type="project" value="UniProtKB-UniRule"/>
</dbReference>
<dbReference type="FunFam" id="3.40.50.1370:FF:000008">
    <property type="entry name" value="Ornithine carbamoyltransferase"/>
    <property type="match status" value="1"/>
</dbReference>
<dbReference type="Gene3D" id="3.40.50.1370">
    <property type="entry name" value="Aspartate/ornithine carbamoyltransferase"/>
    <property type="match status" value="2"/>
</dbReference>
<dbReference type="HAMAP" id="MF_01109">
    <property type="entry name" value="OTCase"/>
    <property type="match status" value="1"/>
</dbReference>
<dbReference type="InterPro" id="IPR006132">
    <property type="entry name" value="Asp/Orn_carbamoyltranf_P-bd"/>
</dbReference>
<dbReference type="InterPro" id="IPR006130">
    <property type="entry name" value="Asp/Orn_carbamoylTrfase"/>
</dbReference>
<dbReference type="InterPro" id="IPR036901">
    <property type="entry name" value="Asp/Orn_carbamoylTrfase_sf"/>
</dbReference>
<dbReference type="InterPro" id="IPR006131">
    <property type="entry name" value="Asp_carbamoyltransf_Asp/Orn-bd"/>
</dbReference>
<dbReference type="InterPro" id="IPR002292">
    <property type="entry name" value="Orn/put_carbamltrans"/>
</dbReference>
<dbReference type="InterPro" id="IPR024904">
    <property type="entry name" value="OTCase_ArgI"/>
</dbReference>
<dbReference type="NCBIfam" id="TIGR00658">
    <property type="entry name" value="orni_carb_tr"/>
    <property type="match status" value="1"/>
</dbReference>
<dbReference type="NCBIfam" id="NF001986">
    <property type="entry name" value="PRK00779.1"/>
    <property type="match status" value="1"/>
</dbReference>
<dbReference type="PANTHER" id="PTHR45753">
    <property type="entry name" value="ORNITHINE CARBAMOYLTRANSFERASE, MITOCHONDRIAL"/>
    <property type="match status" value="1"/>
</dbReference>
<dbReference type="PANTHER" id="PTHR45753:SF3">
    <property type="entry name" value="ORNITHINE TRANSCARBAMYLASE, MITOCHONDRIAL"/>
    <property type="match status" value="1"/>
</dbReference>
<dbReference type="Pfam" id="PF00185">
    <property type="entry name" value="OTCace"/>
    <property type="match status" value="1"/>
</dbReference>
<dbReference type="Pfam" id="PF02729">
    <property type="entry name" value="OTCace_N"/>
    <property type="match status" value="1"/>
</dbReference>
<dbReference type="PRINTS" id="PR00100">
    <property type="entry name" value="AOTCASE"/>
</dbReference>
<dbReference type="PRINTS" id="PR00102">
    <property type="entry name" value="OTCASE"/>
</dbReference>
<dbReference type="SUPFAM" id="SSF53671">
    <property type="entry name" value="Aspartate/ornithine carbamoyltransferase"/>
    <property type="match status" value="1"/>
</dbReference>
<dbReference type="PROSITE" id="PS00097">
    <property type="entry name" value="CARBAMOYLTRANSFERASE"/>
    <property type="match status" value="1"/>
</dbReference>
<organism>
    <name type="scientific">Roseobacter denitrificans (strain ATCC 33942 / OCh 114)</name>
    <name type="common">Erythrobacter sp. (strain OCh 114)</name>
    <name type="synonym">Roseobacter denitrificans</name>
    <dbReference type="NCBI Taxonomy" id="375451"/>
    <lineage>
        <taxon>Bacteria</taxon>
        <taxon>Pseudomonadati</taxon>
        <taxon>Pseudomonadota</taxon>
        <taxon>Alphaproteobacteria</taxon>
        <taxon>Rhodobacterales</taxon>
        <taxon>Roseobacteraceae</taxon>
        <taxon>Roseobacter</taxon>
    </lineage>
</organism>
<name>OTC_ROSDO</name>
<proteinExistence type="inferred from homology"/>
<gene>
    <name evidence="2" type="primary">argF</name>
    <name type="ordered locus">RD1_1677</name>
</gene>
<protein>
    <recommendedName>
        <fullName evidence="2">Ornithine carbamoyltransferase</fullName>
        <shortName evidence="2">OTCase</shortName>
        <ecNumber evidence="2">2.1.3.3</ecNumber>
    </recommendedName>
</protein>
<keyword id="KW-0028">Amino-acid biosynthesis</keyword>
<keyword id="KW-0055">Arginine biosynthesis</keyword>
<keyword id="KW-0963">Cytoplasm</keyword>
<keyword id="KW-1185">Reference proteome</keyword>
<keyword id="KW-0808">Transferase</keyword>
<comment type="function">
    <text evidence="1">Reversibly catalyzes the transfer of the carbamoyl group from carbamoyl phosphate (CP) to the N(epsilon) atom of ornithine (ORN) to produce L-citrulline.</text>
</comment>
<comment type="catalytic activity">
    <reaction evidence="2">
        <text>carbamoyl phosphate + L-ornithine = L-citrulline + phosphate + H(+)</text>
        <dbReference type="Rhea" id="RHEA:19513"/>
        <dbReference type="ChEBI" id="CHEBI:15378"/>
        <dbReference type="ChEBI" id="CHEBI:43474"/>
        <dbReference type="ChEBI" id="CHEBI:46911"/>
        <dbReference type="ChEBI" id="CHEBI:57743"/>
        <dbReference type="ChEBI" id="CHEBI:58228"/>
        <dbReference type="EC" id="2.1.3.3"/>
    </reaction>
</comment>
<comment type="pathway">
    <text evidence="2">Amino-acid biosynthesis; L-arginine biosynthesis; L-arginine from L-ornithine and carbamoyl phosphate: step 1/3.</text>
</comment>
<comment type="subcellular location">
    <subcellularLocation>
        <location evidence="2">Cytoplasm</location>
    </subcellularLocation>
</comment>
<comment type="similarity">
    <text evidence="2">Belongs to the aspartate/ornithine carbamoyltransferase superfamily. OTCase family.</text>
</comment>